<reference key="1">
    <citation type="journal article" date="2005" name="J. Bacteriol.">
        <title>Insights on evolution of virulence and resistance from the complete genome analysis of an early methicillin-resistant Staphylococcus aureus strain and a biofilm-producing methicillin-resistant Staphylococcus epidermidis strain.</title>
        <authorList>
            <person name="Gill S.R."/>
            <person name="Fouts D.E."/>
            <person name="Archer G.L."/>
            <person name="Mongodin E.F."/>
            <person name="DeBoy R.T."/>
            <person name="Ravel J."/>
            <person name="Paulsen I.T."/>
            <person name="Kolonay J.F."/>
            <person name="Brinkac L.M."/>
            <person name="Beanan M.J."/>
            <person name="Dodson R.J."/>
            <person name="Daugherty S.C."/>
            <person name="Madupu R."/>
            <person name="Angiuoli S.V."/>
            <person name="Durkin A.S."/>
            <person name="Haft D.H."/>
            <person name="Vamathevan J.J."/>
            <person name="Khouri H."/>
            <person name="Utterback T.R."/>
            <person name="Lee C."/>
            <person name="Dimitrov G."/>
            <person name="Jiang L."/>
            <person name="Qin H."/>
            <person name="Weidman J."/>
            <person name="Tran K."/>
            <person name="Kang K.H."/>
            <person name="Hance I.R."/>
            <person name="Nelson K.E."/>
            <person name="Fraser C.M."/>
        </authorList>
    </citation>
    <scope>NUCLEOTIDE SEQUENCE [LARGE SCALE GENOMIC DNA]</scope>
    <source>
        <strain>ATCC 35984 / DSM 28319 / BCRC 17069 / CCUG 31568 / BM 3577 / RP62A</strain>
    </source>
</reference>
<organism>
    <name type="scientific">Staphylococcus epidermidis (strain ATCC 35984 / DSM 28319 / BCRC 17069 / CCUG 31568 / BM 3577 / RP62A)</name>
    <dbReference type="NCBI Taxonomy" id="176279"/>
    <lineage>
        <taxon>Bacteria</taxon>
        <taxon>Bacillati</taxon>
        <taxon>Bacillota</taxon>
        <taxon>Bacilli</taxon>
        <taxon>Bacillales</taxon>
        <taxon>Staphylococcaceae</taxon>
        <taxon>Staphylococcus</taxon>
    </lineage>
</organism>
<proteinExistence type="inferred from homology"/>
<name>END4_STAEQ</name>
<evidence type="ECO:0000255" key="1">
    <source>
        <dbReference type="HAMAP-Rule" id="MF_00152"/>
    </source>
</evidence>
<dbReference type="EC" id="3.1.21.2" evidence="1"/>
<dbReference type="EMBL" id="CP000029">
    <property type="protein sequence ID" value="AAW54536.1"/>
    <property type="molecule type" value="Genomic_DNA"/>
</dbReference>
<dbReference type="RefSeq" id="WP_002456488.1">
    <property type="nucleotide sequence ID" value="NC_002976.3"/>
</dbReference>
<dbReference type="SMR" id="Q5HNZ1"/>
<dbReference type="STRING" id="176279.SERP1123"/>
<dbReference type="KEGG" id="ser:SERP1123"/>
<dbReference type="eggNOG" id="COG0648">
    <property type="taxonomic scope" value="Bacteria"/>
</dbReference>
<dbReference type="HOGENOM" id="CLU_025885_4_1_9"/>
<dbReference type="Proteomes" id="UP000000531">
    <property type="component" value="Chromosome"/>
</dbReference>
<dbReference type="GO" id="GO:0008833">
    <property type="term" value="F:deoxyribonuclease IV (phage-T4-induced) activity"/>
    <property type="evidence" value="ECO:0007669"/>
    <property type="project" value="UniProtKB-UniRule"/>
</dbReference>
<dbReference type="GO" id="GO:0003677">
    <property type="term" value="F:DNA binding"/>
    <property type="evidence" value="ECO:0007669"/>
    <property type="project" value="InterPro"/>
</dbReference>
<dbReference type="GO" id="GO:0003906">
    <property type="term" value="F:DNA-(apurinic or apyrimidinic site) endonuclease activity"/>
    <property type="evidence" value="ECO:0007669"/>
    <property type="project" value="TreeGrafter"/>
</dbReference>
<dbReference type="GO" id="GO:0008081">
    <property type="term" value="F:phosphoric diester hydrolase activity"/>
    <property type="evidence" value="ECO:0007669"/>
    <property type="project" value="TreeGrafter"/>
</dbReference>
<dbReference type="GO" id="GO:0008270">
    <property type="term" value="F:zinc ion binding"/>
    <property type="evidence" value="ECO:0007669"/>
    <property type="project" value="UniProtKB-UniRule"/>
</dbReference>
<dbReference type="GO" id="GO:0006284">
    <property type="term" value="P:base-excision repair"/>
    <property type="evidence" value="ECO:0007669"/>
    <property type="project" value="TreeGrafter"/>
</dbReference>
<dbReference type="CDD" id="cd00019">
    <property type="entry name" value="AP2Ec"/>
    <property type="match status" value="1"/>
</dbReference>
<dbReference type="FunFam" id="3.20.20.150:FF:000001">
    <property type="entry name" value="Probable endonuclease 4"/>
    <property type="match status" value="1"/>
</dbReference>
<dbReference type="Gene3D" id="3.20.20.150">
    <property type="entry name" value="Divalent-metal-dependent TIM barrel enzymes"/>
    <property type="match status" value="1"/>
</dbReference>
<dbReference type="HAMAP" id="MF_00152">
    <property type="entry name" value="Nfo"/>
    <property type="match status" value="1"/>
</dbReference>
<dbReference type="InterPro" id="IPR001719">
    <property type="entry name" value="AP_endonuc_2"/>
</dbReference>
<dbReference type="InterPro" id="IPR018246">
    <property type="entry name" value="AP_endonuc_F2_Zn_BS"/>
</dbReference>
<dbReference type="InterPro" id="IPR036237">
    <property type="entry name" value="Xyl_isomerase-like_sf"/>
</dbReference>
<dbReference type="InterPro" id="IPR013022">
    <property type="entry name" value="Xyl_isomerase-like_TIM-brl"/>
</dbReference>
<dbReference type="NCBIfam" id="TIGR00587">
    <property type="entry name" value="nfo"/>
    <property type="match status" value="1"/>
</dbReference>
<dbReference type="NCBIfam" id="NF002196">
    <property type="entry name" value="PRK01060.1-1"/>
    <property type="match status" value="1"/>
</dbReference>
<dbReference type="PANTHER" id="PTHR21445:SF0">
    <property type="entry name" value="APURINIC-APYRIMIDINIC ENDONUCLEASE"/>
    <property type="match status" value="1"/>
</dbReference>
<dbReference type="PANTHER" id="PTHR21445">
    <property type="entry name" value="ENDONUCLEASE IV ENDODEOXYRIBONUCLEASE IV"/>
    <property type="match status" value="1"/>
</dbReference>
<dbReference type="Pfam" id="PF01261">
    <property type="entry name" value="AP_endonuc_2"/>
    <property type="match status" value="1"/>
</dbReference>
<dbReference type="SMART" id="SM00518">
    <property type="entry name" value="AP2Ec"/>
    <property type="match status" value="1"/>
</dbReference>
<dbReference type="SUPFAM" id="SSF51658">
    <property type="entry name" value="Xylose isomerase-like"/>
    <property type="match status" value="1"/>
</dbReference>
<dbReference type="PROSITE" id="PS00729">
    <property type="entry name" value="AP_NUCLEASE_F2_1"/>
    <property type="match status" value="1"/>
</dbReference>
<dbReference type="PROSITE" id="PS00730">
    <property type="entry name" value="AP_NUCLEASE_F2_2"/>
    <property type="match status" value="1"/>
</dbReference>
<dbReference type="PROSITE" id="PS00731">
    <property type="entry name" value="AP_NUCLEASE_F2_3"/>
    <property type="match status" value="1"/>
</dbReference>
<dbReference type="PROSITE" id="PS51432">
    <property type="entry name" value="AP_NUCLEASE_F2_4"/>
    <property type="match status" value="1"/>
</dbReference>
<sequence length="296" mass="33030">MLIGSHVSMSGKKMLQGSAEEAHKYGESTFMIYTGAPQNTRRKNIEDLNIEKGQQAMKTYGLSNIVVHAPYIINIANTTKPEVFNLGVDFLQKEIERTQALGAKDIVLHPGAHVGAGVDKGIQKIIEGLNEVLTHDNDVRIALETMAGKGTEVGRSFEEIAQIIDGVTHNDRLSVCFDTCHTHDAGYNVKEDFDGVLEKFDSIIGVDRIKVVHVNDSKNLRGAQKDRHENIGFGHIGFDALNYVVHHDTFKNIPKILETPYVGEDKKNKKPPYKLEIDMLKSQKFDPELKNKILTQ</sequence>
<comment type="function">
    <text evidence="1">Endonuclease IV plays a role in DNA repair. It cleaves phosphodiester bonds at apurinic or apyrimidinic (AP) sites, generating a 3'-hydroxyl group and a 5'-terminal sugar phosphate.</text>
</comment>
<comment type="catalytic activity">
    <reaction evidence="1">
        <text>Endonucleolytic cleavage to 5'-phosphooligonucleotide end-products.</text>
        <dbReference type="EC" id="3.1.21.2"/>
    </reaction>
</comment>
<comment type="cofactor">
    <cofactor evidence="1">
        <name>Zn(2+)</name>
        <dbReference type="ChEBI" id="CHEBI:29105"/>
    </cofactor>
    <text evidence="1">Binds 3 Zn(2+) ions.</text>
</comment>
<comment type="similarity">
    <text evidence="1">Belongs to the AP endonuclease 2 family.</text>
</comment>
<feature type="chain" id="PRO_0000190876" description="Probable endonuclease 4">
    <location>
        <begin position="1"/>
        <end position="296"/>
    </location>
</feature>
<feature type="binding site" evidence="1">
    <location>
        <position position="68"/>
    </location>
    <ligand>
        <name>Zn(2+)</name>
        <dbReference type="ChEBI" id="CHEBI:29105"/>
        <label>1</label>
    </ligand>
</feature>
<feature type="binding site" evidence="1">
    <location>
        <position position="109"/>
    </location>
    <ligand>
        <name>Zn(2+)</name>
        <dbReference type="ChEBI" id="CHEBI:29105"/>
        <label>1</label>
    </ligand>
</feature>
<feature type="binding site" evidence="1">
    <location>
        <position position="144"/>
    </location>
    <ligand>
        <name>Zn(2+)</name>
        <dbReference type="ChEBI" id="CHEBI:29105"/>
        <label>1</label>
    </ligand>
</feature>
<feature type="binding site" evidence="1">
    <location>
        <position position="144"/>
    </location>
    <ligand>
        <name>Zn(2+)</name>
        <dbReference type="ChEBI" id="CHEBI:29105"/>
        <label>2</label>
    </ligand>
</feature>
<feature type="binding site" evidence="1">
    <location>
        <position position="178"/>
    </location>
    <ligand>
        <name>Zn(2+)</name>
        <dbReference type="ChEBI" id="CHEBI:29105"/>
        <label>2</label>
    </ligand>
</feature>
<feature type="binding site" evidence="1">
    <location>
        <position position="181"/>
    </location>
    <ligand>
        <name>Zn(2+)</name>
        <dbReference type="ChEBI" id="CHEBI:29105"/>
        <label>3</label>
    </ligand>
</feature>
<feature type="binding site" evidence="1">
    <location>
        <position position="213"/>
    </location>
    <ligand>
        <name>Zn(2+)</name>
        <dbReference type="ChEBI" id="CHEBI:29105"/>
        <label>2</label>
    </ligand>
</feature>
<feature type="binding site" evidence="1">
    <location>
        <position position="226"/>
    </location>
    <ligand>
        <name>Zn(2+)</name>
        <dbReference type="ChEBI" id="CHEBI:29105"/>
        <label>3</label>
    </ligand>
</feature>
<feature type="binding site" evidence="1">
    <location>
        <position position="228"/>
    </location>
    <ligand>
        <name>Zn(2+)</name>
        <dbReference type="ChEBI" id="CHEBI:29105"/>
        <label>3</label>
    </ligand>
</feature>
<feature type="binding site" evidence="1">
    <location>
        <position position="258"/>
    </location>
    <ligand>
        <name>Zn(2+)</name>
        <dbReference type="ChEBI" id="CHEBI:29105"/>
        <label>2</label>
    </ligand>
</feature>
<protein>
    <recommendedName>
        <fullName evidence="1">Probable endonuclease 4</fullName>
        <ecNumber evidence="1">3.1.21.2</ecNumber>
    </recommendedName>
    <alternativeName>
        <fullName evidence="1">Endodeoxyribonuclease IV</fullName>
    </alternativeName>
    <alternativeName>
        <fullName evidence="1">Endonuclease IV</fullName>
    </alternativeName>
</protein>
<gene>
    <name evidence="1" type="primary">nfo</name>
    <name type="ordered locus">SERP1123</name>
</gene>
<keyword id="KW-0227">DNA damage</keyword>
<keyword id="KW-0234">DNA repair</keyword>
<keyword id="KW-0255">Endonuclease</keyword>
<keyword id="KW-0378">Hydrolase</keyword>
<keyword id="KW-0479">Metal-binding</keyword>
<keyword id="KW-0540">Nuclease</keyword>
<keyword id="KW-1185">Reference proteome</keyword>
<keyword id="KW-0862">Zinc</keyword>
<accession>Q5HNZ1</accession>